<keyword id="KW-0687">Ribonucleoprotein</keyword>
<keyword id="KW-0689">Ribosomal protein</keyword>
<keyword id="KW-0694">RNA-binding</keyword>
<keyword id="KW-0699">rRNA-binding</keyword>
<accession>B4S4U7</accession>
<name>RS20_PROA2</name>
<proteinExistence type="inferred from homology"/>
<organism>
    <name type="scientific">Prosthecochloris aestuarii (strain DSM 271 / SK 413)</name>
    <dbReference type="NCBI Taxonomy" id="290512"/>
    <lineage>
        <taxon>Bacteria</taxon>
        <taxon>Pseudomonadati</taxon>
        <taxon>Chlorobiota</taxon>
        <taxon>Chlorobiia</taxon>
        <taxon>Chlorobiales</taxon>
        <taxon>Chlorobiaceae</taxon>
        <taxon>Prosthecochloris</taxon>
    </lineage>
</organism>
<dbReference type="EMBL" id="CP001108">
    <property type="protein sequence ID" value="ACF45445.1"/>
    <property type="molecule type" value="Genomic_DNA"/>
</dbReference>
<dbReference type="RefSeq" id="WP_012504982.1">
    <property type="nucleotide sequence ID" value="NC_011059.1"/>
</dbReference>
<dbReference type="SMR" id="B4S4U7"/>
<dbReference type="STRING" id="290512.Paes_0388"/>
<dbReference type="KEGG" id="paa:Paes_0388"/>
<dbReference type="eggNOG" id="COG0268">
    <property type="taxonomic scope" value="Bacteria"/>
</dbReference>
<dbReference type="HOGENOM" id="CLU_160655_3_1_10"/>
<dbReference type="Proteomes" id="UP000002725">
    <property type="component" value="Chromosome"/>
</dbReference>
<dbReference type="GO" id="GO:0005829">
    <property type="term" value="C:cytosol"/>
    <property type="evidence" value="ECO:0007669"/>
    <property type="project" value="TreeGrafter"/>
</dbReference>
<dbReference type="GO" id="GO:0015935">
    <property type="term" value="C:small ribosomal subunit"/>
    <property type="evidence" value="ECO:0007669"/>
    <property type="project" value="TreeGrafter"/>
</dbReference>
<dbReference type="GO" id="GO:0070181">
    <property type="term" value="F:small ribosomal subunit rRNA binding"/>
    <property type="evidence" value="ECO:0007669"/>
    <property type="project" value="TreeGrafter"/>
</dbReference>
<dbReference type="GO" id="GO:0003735">
    <property type="term" value="F:structural constituent of ribosome"/>
    <property type="evidence" value="ECO:0007669"/>
    <property type="project" value="InterPro"/>
</dbReference>
<dbReference type="GO" id="GO:0006412">
    <property type="term" value="P:translation"/>
    <property type="evidence" value="ECO:0007669"/>
    <property type="project" value="UniProtKB-UniRule"/>
</dbReference>
<dbReference type="Gene3D" id="1.20.58.110">
    <property type="entry name" value="Ribosomal protein S20"/>
    <property type="match status" value="1"/>
</dbReference>
<dbReference type="HAMAP" id="MF_00500">
    <property type="entry name" value="Ribosomal_bS20"/>
    <property type="match status" value="1"/>
</dbReference>
<dbReference type="InterPro" id="IPR002583">
    <property type="entry name" value="Ribosomal_bS20"/>
</dbReference>
<dbReference type="InterPro" id="IPR036510">
    <property type="entry name" value="Ribosomal_bS20_sf"/>
</dbReference>
<dbReference type="NCBIfam" id="TIGR00029">
    <property type="entry name" value="S20"/>
    <property type="match status" value="1"/>
</dbReference>
<dbReference type="PANTHER" id="PTHR33398">
    <property type="entry name" value="30S RIBOSOMAL PROTEIN S20"/>
    <property type="match status" value="1"/>
</dbReference>
<dbReference type="PANTHER" id="PTHR33398:SF1">
    <property type="entry name" value="SMALL RIBOSOMAL SUBUNIT PROTEIN BS20C"/>
    <property type="match status" value="1"/>
</dbReference>
<dbReference type="Pfam" id="PF01649">
    <property type="entry name" value="Ribosomal_S20p"/>
    <property type="match status" value="1"/>
</dbReference>
<dbReference type="SUPFAM" id="SSF46992">
    <property type="entry name" value="Ribosomal protein S20"/>
    <property type="match status" value="1"/>
</dbReference>
<gene>
    <name evidence="1" type="primary">rpsT</name>
    <name type="ordered locus">Paes_0388</name>
</gene>
<evidence type="ECO:0000255" key="1">
    <source>
        <dbReference type="HAMAP-Rule" id="MF_00500"/>
    </source>
</evidence>
<evidence type="ECO:0000256" key="2">
    <source>
        <dbReference type="SAM" id="MobiDB-lite"/>
    </source>
</evidence>
<evidence type="ECO:0000305" key="3"/>
<feature type="chain" id="PRO_1000126494" description="Small ribosomal subunit protein bS20">
    <location>
        <begin position="1"/>
        <end position="91"/>
    </location>
</feature>
<feature type="region of interest" description="Disordered" evidence="2">
    <location>
        <begin position="1"/>
        <end position="25"/>
    </location>
</feature>
<feature type="region of interest" description="Disordered" evidence="2">
    <location>
        <begin position="71"/>
        <end position="91"/>
    </location>
</feature>
<feature type="compositionally biased region" description="Basic and acidic residues" evidence="2">
    <location>
        <begin position="1"/>
        <end position="21"/>
    </location>
</feature>
<sequence>MPLHKSAEKRLRQSARRNERNRARKKELKVLLKNVQKLIDTNADQGEVEAAYRSAVQKLDRLGVKRYIHPNKASRKKSQLSRMLNAYAQKD</sequence>
<reference key="1">
    <citation type="submission" date="2008-06" db="EMBL/GenBank/DDBJ databases">
        <title>Complete sequence of chromosome of Prosthecochloris aestuarii DSM 271.</title>
        <authorList>
            <consortium name="US DOE Joint Genome Institute"/>
            <person name="Lucas S."/>
            <person name="Copeland A."/>
            <person name="Lapidus A."/>
            <person name="Glavina del Rio T."/>
            <person name="Dalin E."/>
            <person name="Tice H."/>
            <person name="Bruce D."/>
            <person name="Goodwin L."/>
            <person name="Pitluck S."/>
            <person name="Schmutz J."/>
            <person name="Larimer F."/>
            <person name="Land M."/>
            <person name="Hauser L."/>
            <person name="Kyrpides N."/>
            <person name="Anderson I."/>
            <person name="Liu Z."/>
            <person name="Li T."/>
            <person name="Zhao F."/>
            <person name="Overmann J."/>
            <person name="Bryant D.A."/>
            <person name="Richardson P."/>
        </authorList>
    </citation>
    <scope>NUCLEOTIDE SEQUENCE [LARGE SCALE GENOMIC DNA]</scope>
    <source>
        <strain>DSM 271 / SK 413</strain>
    </source>
</reference>
<protein>
    <recommendedName>
        <fullName evidence="1">Small ribosomal subunit protein bS20</fullName>
    </recommendedName>
    <alternativeName>
        <fullName evidence="3">30S ribosomal protein S20</fullName>
    </alternativeName>
</protein>
<comment type="function">
    <text evidence="1">Binds directly to 16S ribosomal RNA.</text>
</comment>
<comment type="similarity">
    <text evidence="1">Belongs to the bacterial ribosomal protein bS20 family.</text>
</comment>